<reference key="1">
    <citation type="journal article" date="2005" name="Proc. Natl. Acad. Sci. U.S.A.">
        <title>Complete genome sequencing of Anaplasma marginale reveals that the surface is skewed to two superfamilies of outer membrane proteins.</title>
        <authorList>
            <person name="Brayton K.A."/>
            <person name="Kappmeyer L.S."/>
            <person name="Herndon D.R."/>
            <person name="Dark M.J."/>
            <person name="Tibbals D.L."/>
            <person name="Palmer G.H."/>
            <person name="McGuire T.C."/>
            <person name="Knowles D.P. Jr."/>
        </authorList>
    </citation>
    <scope>NUCLEOTIDE SEQUENCE [LARGE SCALE GENOMIC DNA]</scope>
    <source>
        <strain>St. Maries</strain>
    </source>
</reference>
<feature type="chain" id="PRO_1000001714" description="Phosphate acyltransferase">
    <location>
        <begin position="1"/>
        <end position="347"/>
    </location>
</feature>
<keyword id="KW-0963">Cytoplasm</keyword>
<keyword id="KW-0444">Lipid biosynthesis</keyword>
<keyword id="KW-0443">Lipid metabolism</keyword>
<keyword id="KW-0594">Phospholipid biosynthesis</keyword>
<keyword id="KW-1208">Phospholipid metabolism</keyword>
<keyword id="KW-0808">Transferase</keyword>
<comment type="function">
    <text evidence="1">Catalyzes the reversible formation of acyl-phosphate (acyl-PO(4)) from acyl-[acyl-carrier-protein] (acyl-ACP). This enzyme utilizes acyl-ACP as fatty acyl donor, but not acyl-CoA.</text>
</comment>
<comment type="catalytic activity">
    <reaction evidence="1">
        <text>a fatty acyl-[ACP] + phosphate = an acyl phosphate + holo-[ACP]</text>
        <dbReference type="Rhea" id="RHEA:42292"/>
        <dbReference type="Rhea" id="RHEA-COMP:9685"/>
        <dbReference type="Rhea" id="RHEA-COMP:14125"/>
        <dbReference type="ChEBI" id="CHEBI:43474"/>
        <dbReference type="ChEBI" id="CHEBI:59918"/>
        <dbReference type="ChEBI" id="CHEBI:64479"/>
        <dbReference type="ChEBI" id="CHEBI:138651"/>
        <dbReference type="EC" id="2.3.1.274"/>
    </reaction>
</comment>
<comment type="pathway">
    <text evidence="1">Lipid metabolism; phospholipid metabolism.</text>
</comment>
<comment type="subunit">
    <text evidence="1">Homodimer. Probably interacts with PlsY.</text>
</comment>
<comment type="subcellular location">
    <subcellularLocation>
        <location evidence="1">Cytoplasm</location>
    </subcellularLocation>
    <text evidence="1">Associated with the membrane possibly through PlsY.</text>
</comment>
<comment type="similarity">
    <text evidence="1">Belongs to the PlsX family.</text>
</comment>
<organism>
    <name type="scientific">Anaplasma marginale (strain St. Maries)</name>
    <dbReference type="NCBI Taxonomy" id="234826"/>
    <lineage>
        <taxon>Bacteria</taxon>
        <taxon>Pseudomonadati</taxon>
        <taxon>Pseudomonadota</taxon>
        <taxon>Alphaproteobacteria</taxon>
        <taxon>Rickettsiales</taxon>
        <taxon>Anaplasmataceae</taxon>
        <taxon>Anaplasma</taxon>
    </lineage>
</organism>
<evidence type="ECO:0000255" key="1">
    <source>
        <dbReference type="HAMAP-Rule" id="MF_00019"/>
    </source>
</evidence>
<accession>Q5PA97</accession>
<gene>
    <name evidence="1" type="primary">plsX</name>
    <name type="ordered locus">AM870</name>
</gene>
<proteinExistence type="inferred from homology"/>
<name>PLSX_ANAMM</name>
<dbReference type="EC" id="2.3.1.274" evidence="1"/>
<dbReference type="EMBL" id="CP000030">
    <property type="protein sequence ID" value="AAV86783.1"/>
    <property type="molecule type" value="Genomic_DNA"/>
</dbReference>
<dbReference type="SMR" id="Q5PA97"/>
<dbReference type="KEGG" id="ama:AM870"/>
<dbReference type="HOGENOM" id="CLU_039379_1_0_5"/>
<dbReference type="UniPathway" id="UPA00085"/>
<dbReference type="GO" id="GO:0005737">
    <property type="term" value="C:cytoplasm"/>
    <property type="evidence" value="ECO:0007669"/>
    <property type="project" value="UniProtKB-SubCell"/>
</dbReference>
<dbReference type="GO" id="GO:0043811">
    <property type="term" value="F:phosphate:acyl-[acyl carrier protein] acyltransferase activity"/>
    <property type="evidence" value="ECO:0007669"/>
    <property type="project" value="UniProtKB-UniRule"/>
</dbReference>
<dbReference type="GO" id="GO:0006633">
    <property type="term" value="P:fatty acid biosynthetic process"/>
    <property type="evidence" value="ECO:0007669"/>
    <property type="project" value="UniProtKB-UniRule"/>
</dbReference>
<dbReference type="GO" id="GO:0008654">
    <property type="term" value="P:phospholipid biosynthetic process"/>
    <property type="evidence" value="ECO:0007669"/>
    <property type="project" value="UniProtKB-KW"/>
</dbReference>
<dbReference type="Gene3D" id="3.40.718.10">
    <property type="entry name" value="Isopropylmalate Dehydrogenase"/>
    <property type="match status" value="1"/>
</dbReference>
<dbReference type="HAMAP" id="MF_00019">
    <property type="entry name" value="PlsX"/>
    <property type="match status" value="1"/>
</dbReference>
<dbReference type="InterPro" id="IPR003664">
    <property type="entry name" value="FA_synthesis"/>
</dbReference>
<dbReference type="InterPro" id="IPR012281">
    <property type="entry name" value="Phospholipid_synth_PlsX-like"/>
</dbReference>
<dbReference type="NCBIfam" id="TIGR00182">
    <property type="entry name" value="plsX"/>
    <property type="match status" value="1"/>
</dbReference>
<dbReference type="PANTHER" id="PTHR30100">
    <property type="entry name" value="FATTY ACID/PHOSPHOLIPID SYNTHESIS PROTEIN PLSX"/>
    <property type="match status" value="1"/>
</dbReference>
<dbReference type="PANTHER" id="PTHR30100:SF1">
    <property type="entry name" value="PHOSPHATE ACYLTRANSFERASE"/>
    <property type="match status" value="1"/>
</dbReference>
<dbReference type="Pfam" id="PF02504">
    <property type="entry name" value="FA_synthesis"/>
    <property type="match status" value="1"/>
</dbReference>
<dbReference type="PIRSF" id="PIRSF002465">
    <property type="entry name" value="Phsphlp_syn_PlsX"/>
    <property type="match status" value="1"/>
</dbReference>
<dbReference type="SUPFAM" id="SSF53659">
    <property type="entry name" value="Isocitrate/Isopropylmalate dehydrogenase-like"/>
    <property type="match status" value="1"/>
</dbReference>
<sequence>MVRDSGACVSVALDAMGADLGPEVAIKGADLVLSGAVPCKHKVHLSIYGKESAVLPVLGKYKLVEKNSVFIDTPDAVLCDDRPSFALRHRRKSSMWCAIEDVKKGVVASAVSAGNTGALMAISRYLLGTLQGIDRPAIATVLPSRKGSFVALDLGANAECAPGLLFQFAIMGRAFARAVLGVEHPKVGLLNIGAEDTKGTYNIQEAFALMRDAKQDINFYGYVEAKEAFDGVADVVVADGFSGNIMLKTCEAVAGLTLHILKKEICSSLMGRAAMRILRSCYFKRTSGSALDVRSYNGAVLLGLNGIVVKSHGSADATAFAHAIKEAVCVISQGDMAKEMISEVSNG</sequence>
<protein>
    <recommendedName>
        <fullName evidence="1">Phosphate acyltransferase</fullName>
        <ecNumber evidence="1">2.3.1.274</ecNumber>
    </recommendedName>
    <alternativeName>
        <fullName evidence="1">Acyl-ACP phosphotransacylase</fullName>
    </alternativeName>
    <alternativeName>
        <fullName evidence="1">Acyl-[acyl-carrier-protein]--phosphate acyltransferase</fullName>
    </alternativeName>
    <alternativeName>
        <fullName evidence="1">Phosphate-acyl-ACP acyltransferase</fullName>
    </alternativeName>
</protein>